<accession>Q6AK99</accession>
<keyword id="KW-0004">4Fe-4S</keyword>
<keyword id="KW-0408">Iron</keyword>
<keyword id="KW-0411">Iron-sulfur</keyword>
<keyword id="KW-0456">Lyase</keyword>
<keyword id="KW-0479">Metal-binding</keyword>
<keyword id="KW-1185">Reference proteome</keyword>
<keyword id="KW-0949">S-adenosyl-L-methionine</keyword>
<keyword id="KW-0784">Thiamine biosynthesis</keyword>
<keyword id="KW-0862">Zinc</keyword>
<gene>
    <name evidence="1" type="primary">thiC</name>
    <name type="ordered locus">DP2498</name>
</gene>
<evidence type="ECO:0000255" key="1">
    <source>
        <dbReference type="HAMAP-Rule" id="MF_00089"/>
    </source>
</evidence>
<protein>
    <recommendedName>
        <fullName evidence="1">Phosphomethylpyrimidine synthase</fullName>
        <ecNumber evidence="1">4.1.99.17</ecNumber>
    </recommendedName>
    <alternativeName>
        <fullName evidence="1">Hydroxymethylpyrimidine phosphate synthase</fullName>
        <shortName evidence="1">HMP-P synthase</shortName>
        <shortName evidence="1">HMP-phosphate synthase</shortName>
        <shortName evidence="1">HMPP synthase</shortName>
    </alternativeName>
    <alternativeName>
        <fullName evidence="1">Thiamine biosynthesis protein ThiC</fullName>
    </alternativeName>
</protein>
<organism>
    <name type="scientific">Desulfotalea psychrophila (strain LSv54 / DSM 12343)</name>
    <dbReference type="NCBI Taxonomy" id="177439"/>
    <lineage>
        <taxon>Bacteria</taxon>
        <taxon>Pseudomonadati</taxon>
        <taxon>Thermodesulfobacteriota</taxon>
        <taxon>Desulfobulbia</taxon>
        <taxon>Desulfobulbales</taxon>
        <taxon>Desulfocapsaceae</taxon>
        <taxon>Desulfotalea</taxon>
    </lineage>
</organism>
<comment type="function">
    <text evidence="1">Catalyzes the synthesis of the hydroxymethylpyrimidine phosphate (HMP-P) moiety of thiamine from aminoimidazole ribotide (AIR) in a radical S-adenosyl-L-methionine (SAM)-dependent reaction.</text>
</comment>
<comment type="catalytic activity">
    <reaction evidence="1">
        <text>5-amino-1-(5-phospho-beta-D-ribosyl)imidazole + S-adenosyl-L-methionine = 4-amino-2-methyl-5-(phosphooxymethyl)pyrimidine + CO + 5'-deoxyadenosine + formate + L-methionine + 3 H(+)</text>
        <dbReference type="Rhea" id="RHEA:24840"/>
        <dbReference type="ChEBI" id="CHEBI:15378"/>
        <dbReference type="ChEBI" id="CHEBI:15740"/>
        <dbReference type="ChEBI" id="CHEBI:17245"/>
        <dbReference type="ChEBI" id="CHEBI:17319"/>
        <dbReference type="ChEBI" id="CHEBI:57844"/>
        <dbReference type="ChEBI" id="CHEBI:58354"/>
        <dbReference type="ChEBI" id="CHEBI:59789"/>
        <dbReference type="ChEBI" id="CHEBI:137981"/>
        <dbReference type="EC" id="4.1.99.17"/>
    </reaction>
</comment>
<comment type="cofactor">
    <cofactor evidence="1">
        <name>[4Fe-4S] cluster</name>
        <dbReference type="ChEBI" id="CHEBI:49883"/>
    </cofactor>
    <text evidence="1">Binds 1 [4Fe-4S] cluster per subunit. The cluster is coordinated with 3 cysteines and an exchangeable S-adenosyl-L-methionine.</text>
</comment>
<comment type="pathway">
    <text evidence="1">Cofactor biosynthesis; thiamine diphosphate biosynthesis.</text>
</comment>
<comment type="subunit">
    <text evidence="1">Homodimer.</text>
</comment>
<comment type="similarity">
    <text evidence="1">Belongs to the ThiC family.</text>
</comment>
<proteinExistence type="inferred from homology"/>
<name>THIC_DESPS</name>
<feature type="chain" id="PRO_0000242257" description="Phosphomethylpyrimidine synthase">
    <location>
        <begin position="1"/>
        <end position="434"/>
    </location>
</feature>
<feature type="binding site" evidence="1">
    <location>
        <position position="74"/>
    </location>
    <ligand>
        <name>substrate</name>
    </ligand>
</feature>
<feature type="binding site" evidence="1">
    <location>
        <position position="103"/>
    </location>
    <ligand>
        <name>substrate</name>
    </ligand>
</feature>
<feature type="binding site" evidence="1">
    <location>
        <position position="132"/>
    </location>
    <ligand>
        <name>substrate</name>
    </ligand>
</feature>
<feature type="binding site" evidence="1">
    <location>
        <position position="171"/>
    </location>
    <ligand>
        <name>substrate</name>
    </ligand>
</feature>
<feature type="binding site" evidence="1">
    <location>
        <begin position="193"/>
        <end position="195"/>
    </location>
    <ligand>
        <name>substrate</name>
    </ligand>
</feature>
<feature type="binding site" evidence="1">
    <location>
        <begin position="234"/>
        <end position="237"/>
    </location>
    <ligand>
        <name>substrate</name>
    </ligand>
</feature>
<feature type="binding site" evidence="1">
    <location>
        <position position="273"/>
    </location>
    <ligand>
        <name>substrate</name>
    </ligand>
</feature>
<feature type="binding site" evidence="1">
    <location>
        <position position="277"/>
    </location>
    <ligand>
        <name>Zn(2+)</name>
        <dbReference type="ChEBI" id="CHEBI:29105"/>
    </ligand>
</feature>
<feature type="binding site" evidence="1">
    <location>
        <position position="300"/>
    </location>
    <ligand>
        <name>substrate</name>
    </ligand>
</feature>
<feature type="binding site" evidence="1">
    <location>
        <position position="341"/>
    </location>
    <ligand>
        <name>Zn(2+)</name>
        <dbReference type="ChEBI" id="CHEBI:29105"/>
    </ligand>
</feature>
<feature type="binding site" evidence="1">
    <location>
        <position position="417"/>
    </location>
    <ligand>
        <name>[4Fe-4S] cluster</name>
        <dbReference type="ChEBI" id="CHEBI:49883"/>
        <note>4Fe-4S-S-AdoMet</note>
    </ligand>
</feature>
<feature type="binding site" evidence="1">
    <location>
        <position position="420"/>
    </location>
    <ligand>
        <name>[4Fe-4S] cluster</name>
        <dbReference type="ChEBI" id="CHEBI:49883"/>
        <note>4Fe-4S-S-AdoMet</note>
    </ligand>
</feature>
<feature type="binding site" evidence="1">
    <location>
        <position position="424"/>
    </location>
    <ligand>
        <name>[4Fe-4S] cluster</name>
        <dbReference type="ChEBI" id="CHEBI:49883"/>
        <note>4Fe-4S-S-AdoMet</note>
    </ligand>
</feature>
<reference key="1">
    <citation type="journal article" date="2004" name="Environ. Microbiol.">
        <title>The genome of Desulfotalea psychrophila, a sulfate-reducing bacterium from permanently cold Arctic sediments.</title>
        <authorList>
            <person name="Rabus R."/>
            <person name="Ruepp A."/>
            <person name="Frickey T."/>
            <person name="Rattei T."/>
            <person name="Fartmann B."/>
            <person name="Stark M."/>
            <person name="Bauer M."/>
            <person name="Zibat A."/>
            <person name="Lombardot T."/>
            <person name="Becker I."/>
            <person name="Amann J."/>
            <person name="Gellner K."/>
            <person name="Teeling H."/>
            <person name="Leuschner W.D."/>
            <person name="Gloeckner F.-O."/>
            <person name="Lupas A.N."/>
            <person name="Amann R."/>
            <person name="Klenk H.-P."/>
        </authorList>
    </citation>
    <scope>NUCLEOTIDE SEQUENCE [LARGE SCALE GENOMIC DNA]</scope>
    <source>
        <strain>DSM 12343 / LSv54</strain>
    </source>
</reference>
<dbReference type="EC" id="4.1.99.17" evidence="1"/>
<dbReference type="EMBL" id="CR522870">
    <property type="protein sequence ID" value="CAG37227.1"/>
    <property type="molecule type" value="Genomic_DNA"/>
</dbReference>
<dbReference type="SMR" id="Q6AK99"/>
<dbReference type="STRING" id="177439.DP2498"/>
<dbReference type="KEGG" id="dps:DP2498"/>
<dbReference type="eggNOG" id="COG0422">
    <property type="taxonomic scope" value="Bacteria"/>
</dbReference>
<dbReference type="HOGENOM" id="CLU_013181_2_2_7"/>
<dbReference type="UniPathway" id="UPA00060"/>
<dbReference type="Proteomes" id="UP000000602">
    <property type="component" value="Chromosome"/>
</dbReference>
<dbReference type="GO" id="GO:0005829">
    <property type="term" value="C:cytosol"/>
    <property type="evidence" value="ECO:0007669"/>
    <property type="project" value="TreeGrafter"/>
</dbReference>
<dbReference type="GO" id="GO:0051539">
    <property type="term" value="F:4 iron, 4 sulfur cluster binding"/>
    <property type="evidence" value="ECO:0007669"/>
    <property type="project" value="UniProtKB-KW"/>
</dbReference>
<dbReference type="GO" id="GO:0016830">
    <property type="term" value="F:carbon-carbon lyase activity"/>
    <property type="evidence" value="ECO:0007669"/>
    <property type="project" value="InterPro"/>
</dbReference>
<dbReference type="GO" id="GO:0008270">
    <property type="term" value="F:zinc ion binding"/>
    <property type="evidence" value="ECO:0007669"/>
    <property type="project" value="UniProtKB-UniRule"/>
</dbReference>
<dbReference type="GO" id="GO:0009228">
    <property type="term" value="P:thiamine biosynthetic process"/>
    <property type="evidence" value="ECO:0007669"/>
    <property type="project" value="UniProtKB-KW"/>
</dbReference>
<dbReference type="GO" id="GO:0009229">
    <property type="term" value="P:thiamine diphosphate biosynthetic process"/>
    <property type="evidence" value="ECO:0007669"/>
    <property type="project" value="UniProtKB-UniRule"/>
</dbReference>
<dbReference type="FunFam" id="3.20.20.540:FF:000001">
    <property type="entry name" value="Phosphomethylpyrimidine synthase"/>
    <property type="match status" value="1"/>
</dbReference>
<dbReference type="Gene3D" id="6.10.250.620">
    <property type="match status" value="1"/>
</dbReference>
<dbReference type="Gene3D" id="3.20.20.540">
    <property type="entry name" value="Radical SAM ThiC family, central domain"/>
    <property type="match status" value="1"/>
</dbReference>
<dbReference type="HAMAP" id="MF_00089">
    <property type="entry name" value="ThiC"/>
    <property type="match status" value="1"/>
</dbReference>
<dbReference type="InterPro" id="IPR037509">
    <property type="entry name" value="ThiC"/>
</dbReference>
<dbReference type="InterPro" id="IPR038521">
    <property type="entry name" value="ThiC/Bza_core_dom"/>
</dbReference>
<dbReference type="InterPro" id="IPR002817">
    <property type="entry name" value="ThiC/BzaA/B"/>
</dbReference>
<dbReference type="NCBIfam" id="NF009895">
    <property type="entry name" value="PRK13352.1"/>
    <property type="match status" value="1"/>
</dbReference>
<dbReference type="NCBIfam" id="TIGR00190">
    <property type="entry name" value="thiC"/>
    <property type="match status" value="1"/>
</dbReference>
<dbReference type="PANTHER" id="PTHR30557:SF1">
    <property type="entry name" value="PHOSPHOMETHYLPYRIMIDINE SYNTHASE, CHLOROPLASTIC"/>
    <property type="match status" value="1"/>
</dbReference>
<dbReference type="PANTHER" id="PTHR30557">
    <property type="entry name" value="THIAMINE BIOSYNTHESIS PROTEIN THIC"/>
    <property type="match status" value="1"/>
</dbReference>
<dbReference type="Pfam" id="PF01964">
    <property type="entry name" value="ThiC_Rad_SAM"/>
    <property type="match status" value="1"/>
</dbReference>
<dbReference type="SFLD" id="SFLDF00407">
    <property type="entry name" value="phosphomethylpyrimidine_syntha"/>
    <property type="match status" value="1"/>
</dbReference>
<dbReference type="SFLD" id="SFLDG01114">
    <property type="entry name" value="phosphomethylpyrimidine_syntha"/>
    <property type="match status" value="1"/>
</dbReference>
<dbReference type="SFLD" id="SFLDS00113">
    <property type="entry name" value="Radical_SAM_Phosphomethylpyrim"/>
    <property type="match status" value="1"/>
</dbReference>
<sequence length="434" mass="46957">MTRNLEKKMSIREDAQQGKVTPLFEQCAAVESMSVERLMAGVSDGTIAITKNKNHAFSKVIAIGAGTSTKVNANLGSSKDINSLEEELKKLAVAIKAGADTIMDLSMGGDLQKIRQEILKNCSVPLGTVPIYQVAAEVVAAGKEIVDMTVERMFEVIEQQAKDGVDFMTIHCGINRHLQERLKNQPRTMGVVSRGGSFTLDWMNHHKRENPMYEYFDDLLAILKEHEVTLSLGDGIRPGCLADATDRNQIQELITLGELTERAWAAGVQVIVEGPGHMPLNQIKANVLLQKQMCKGAPFYVLGPLVTDIAPGYDHITGAIGGAIAASAGADYLCYVTPAEHLKLPNCSDVHEGVIASKIAAHAADIVKGLPGAIEKDNAMAKCRKELDWKGQIELSIDPAKSAQYRHEGGGDATDACSMCGEFCALKVFERSQK</sequence>